<gene>
    <name evidence="1" type="primary">pepT</name>
    <name type="ordered locus">YPTS_2521</name>
</gene>
<reference key="1">
    <citation type="submission" date="2008-04" db="EMBL/GenBank/DDBJ databases">
        <title>Complete sequence of Yersinia pseudotuberculosis PB1/+.</title>
        <authorList>
            <person name="Copeland A."/>
            <person name="Lucas S."/>
            <person name="Lapidus A."/>
            <person name="Glavina del Rio T."/>
            <person name="Dalin E."/>
            <person name="Tice H."/>
            <person name="Bruce D."/>
            <person name="Goodwin L."/>
            <person name="Pitluck S."/>
            <person name="Munk A.C."/>
            <person name="Brettin T."/>
            <person name="Detter J.C."/>
            <person name="Han C."/>
            <person name="Tapia R."/>
            <person name="Schmutz J."/>
            <person name="Larimer F."/>
            <person name="Land M."/>
            <person name="Hauser L."/>
            <person name="Challacombe J.F."/>
            <person name="Green L."/>
            <person name="Lindler L.E."/>
            <person name="Nikolich M.P."/>
            <person name="Richardson P."/>
        </authorList>
    </citation>
    <scope>NUCLEOTIDE SEQUENCE [LARGE SCALE GENOMIC DNA]</scope>
    <source>
        <strain>PB1/+</strain>
    </source>
</reference>
<protein>
    <recommendedName>
        <fullName evidence="1">Peptidase T</fullName>
        <ecNumber evidence="1">3.4.11.4</ecNumber>
    </recommendedName>
    <alternativeName>
        <fullName evidence="1">Aminotripeptidase</fullName>
        <shortName evidence="1">Tripeptidase</shortName>
    </alternativeName>
    <alternativeName>
        <fullName evidence="1">Tripeptide aminopeptidase</fullName>
    </alternativeName>
</protein>
<dbReference type="EC" id="3.4.11.4" evidence="1"/>
<dbReference type="EMBL" id="CP001048">
    <property type="protein sequence ID" value="ACC89482.1"/>
    <property type="molecule type" value="Genomic_DNA"/>
</dbReference>
<dbReference type="RefSeq" id="WP_002210920.1">
    <property type="nucleotide sequence ID" value="NZ_CP009780.1"/>
</dbReference>
<dbReference type="SMR" id="B2K719"/>
<dbReference type="MEROPS" id="M20.003"/>
<dbReference type="GeneID" id="57976942"/>
<dbReference type="KEGG" id="ypb:YPTS_2521"/>
<dbReference type="PATRIC" id="fig|502801.10.peg.1932"/>
<dbReference type="GO" id="GO:0005829">
    <property type="term" value="C:cytosol"/>
    <property type="evidence" value="ECO:0007669"/>
    <property type="project" value="TreeGrafter"/>
</dbReference>
<dbReference type="GO" id="GO:0008237">
    <property type="term" value="F:metallopeptidase activity"/>
    <property type="evidence" value="ECO:0007669"/>
    <property type="project" value="UniProtKB-KW"/>
</dbReference>
<dbReference type="GO" id="GO:0045148">
    <property type="term" value="F:tripeptide aminopeptidase activity"/>
    <property type="evidence" value="ECO:0007669"/>
    <property type="project" value="UniProtKB-UniRule"/>
</dbReference>
<dbReference type="GO" id="GO:0008270">
    <property type="term" value="F:zinc ion binding"/>
    <property type="evidence" value="ECO:0007669"/>
    <property type="project" value="UniProtKB-UniRule"/>
</dbReference>
<dbReference type="GO" id="GO:0043171">
    <property type="term" value="P:peptide catabolic process"/>
    <property type="evidence" value="ECO:0007669"/>
    <property type="project" value="UniProtKB-UniRule"/>
</dbReference>
<dbReference type="GO" id="GO:0006508">
    <property type="term" value="P:proteolysis"/>
    <property type="evidence" value="ECO:0007669"/>
    <property type="project" value="UniProtKB-UniRule"/>
</dbReference>
<dbReference type="CDD" id="cd03892">
    <property type="entry name" value="M20_peptT"/>
    <property type="match status" value="1"/>
</dbReference>
<dbReference type="FunFam" id="3.30.70.360:FF:000002">
    <property type="entry name" value="Peptidase T"/>
    <property type="match status" value="1"/>
</dbReference>
<dbReference type="Gene3D" id="3.30.70.360">
    <property type="match status" value="1"/>
</dbReference>
<dbReference type="Gene3D" id="3.40.630.10">
    <property type="entry name" value="Zn peptidases"/>
    <property type="match status" value="1"/>
</dbReference>
<dbReference type="HAMAP" id="MF_00550">
    <property type="entry name" value="Aminopeptidase_M20"/>
    <property type="match status" value="1"/>
</dbReference>
<dbReference type="InterPro" id="IPR001261">
    <property type="entry name" value="ArgE/DapE_CS"/>
</dbReference>
<dbReference type="InterPro" id="IPR036264">
    <property type="entry name" value="Bact_exopeptidase_dim_dom"/>
</dbReference>
<dbReference type="InterPro" id="IPR002933">
    <property type="entry name" value="Peptidase_M20"/>
</dbReference>
<dbReference type="InterPro" id="IPR011650">
    <property type="entry name" value="Peptidase_M20_dimer"/>
</dbReference>
<dbReference type="InterPro" id="IPR010161">
    <property type="entry name" value="Peptidase_M20B"/>
</dbReference>
<dbReference type="NCBIfam" id="TIGR01882">
    <property type="entry name" value="peptidase-T"/>
    <property type="match status" value="1"/>
</dbReference>
<dbReference type="NCBIfam" id="NF003976">
    <property type="entry name" value="PRK05469.1"/>
    <property type="match status" value="1"/>
</dbReference>
<dbReference type="NCBIfam" id="NF009920">
    <property type="entry name" value="PRK13381.1"/>
    <property type="match status" value="1"/>
</dbReference>
<dbReference type="PANTHER" id="PTHR42994">
    <property type="entry name" value="PEPTIDASE T"/>
    <property type="match status" value="1"/>
</dbReference>
<dbReference type="PANTHER" id="PTHR42994:SF1">
    <property type="entry name" value="PEPTIDASE T"/>
    <property type="match status" value="1"/>
</dbReference>
<dbReference type="Pfam" id="PF07687">
    <property type="entry name" value="M20_dimer"/>
    <property type="match status" value="1"/>
</dbReference>
<dbReference type="Pfam" id="PF01546">
    <property type="entry name" value="Peptidase_M20"/>
    <property type="match status" value="1"/>
</dbReference>
<dbReference type="PIRSF" id="PIRSF037215">
    <property type="entry name" value="Peptidase_M20B"/>
    <property type="match status" value="1"/>
</dbReference>
<dbReference type="SUPFAM" id="SSF55031">
    <property type="entry name" value="Bacterial exopeptidase dimerisation domain"/>
    <property type="match status" value="1"/>
</dbReference>
<dbReference type="SUPFAM" id="SSF53187">
    <property type="entry name" value="Zn-dependent exopeptidases"/>
    <property type="match status" value="1"/>
</dbReference>
<dbReference type="PROSITE" id="PS00758">
    <property type="entry name" value="ARGE_DAPE_CPG2_1"/>
    <property type="match status" value="1"/>
</dbReference>
<dbReference type="PROSITE" id="PS00759">
    <property type="entry name" value="ARGE_DAPE_CPG2_2"/>
    <property type="match status" value="1"/>
</dbReference>
<feature type="chain" id="PRO_1000129059" description="Peptidase T">
    <location>
        <begin position="1"/>
        <end position="411"/>
    </location>
</feature>
<feature type="active site" evidence="1">
    <location>
        <position position="80"/>
    </location>
</feature>
<feature type="active site" description="Proton acceptor" evidence="1">
    <location>
        <position position="173"/>
    </location>
</feature>
<feature type="binding site" evidence="1">
    <location>
        <position position="78"/>
    </location>
    <ligand>
        <name>Zn(2+)</name>
        <dbReference type="ChEBI" id="CHEBI:29105"/>
        <label>1</label>
    </ligand>
</feature>
<feature type="binding site" evidence="1">
    <location>
        <position position="140"/>
    </location>
    <ligand>
        <name>Zn(2+)</name>
        <dbReference type="ChEBI" id="CHEBI:29105"/>
        <label>1</label>
    </ligand>
</feature>
<feature type="binding site" evidence="1">
    <location>
        <position position="140"/>
    </location>
    <ligand>
        <name>Zn(2+)</name>
        <dbReference type="ChEBI" id="CHEBI:29105"/>
        <label>2</label>
    </ligand>
</feature>
<feature type="binding site" evidence="1">
    <location>
        <position position="174"/>
    </location>
    <ligand>
        <name>Zn(2+)</name>
        <dbReference type="ChEBI" id="CHEBI:29105"/>
        <label>2</label>
    </ligand>
</feature>
<feature type="binding site" evidence="1">
    <location>
        <position position="196"/>
    </location>
    <ligand>
        <name>Zn(2+)</name>
        <dbReference type="ChEBI" id="CHEBI:29105"/>
        <label>1</label>
    </ligand>
</feature>
<feature type="binding site" evidence="1">
    <location>
        <position position="379"/>
    </location>
    <ligand>
        <name>Zn(2+)</name>
        <dbReference type="ChEBI" id="CHEBI:29105"/>
        <label>2</label>
    </ligand>
</feature>
<keyword id="KW-0031">Aminopeptidase</keyword>
<keyword id="KW-0963">Cytoplasm</keyword>
<keyword id="KW-0378">Hydrolase</keyword>
<keyword id="KW-0479">Metal-binding</keyword>
<keyword id="KW-0482">Metalloprotease</keyword>
<keyword id="KW-0645">Protease</keyword>
<keyword id="KW-0862">Zinc</keyword>
<organism>
    <name type="scientific">Yersinia pseudotuberculosis serotype IB (strain PB1/+)</name>
    <dbReference type="NCBI Taxonomy" id="502801"/>
    <lineage>
        <taxon>Bacteria</taxon>
        <taxon>Pseudomonadati</taxon>
        <taxon>Pseudomonadota</taxon>
        <taxon>Gammaproteobacteria</taxon>
        <taxon>Enterobacterales</taxon>
        <taxon>Yersiniaceae</taxon>
        <taxon>Yersinia</taxon>
    </lineage>
</organism>
<accession>B2K719</accession>
<sequence length="411" mass="45387">MDKLLDRFFNYVSFDTQAKANVKSVPSTQGQRKLAQALQQELLTLGFSHVTLSDHGCVMATLPANVSWPVPTIGFIAHLDTSPDFSGKNVNPQIVENYRGGDIALGIGDEVLSPVMFPVLHQLLGHTLITTDGKTLLGADDKAGIAEIITAMVRLKHRNVPHGDIRIAFTPDEEVGKGAQFFNVAEFDAQWAYTVDGGGIGELEFENFNAASVAIKIVGNNVHPGSAKGVMVNALSLATRYHQELPVDETPECTEGYDGFYHLQSIKGTVERAEMHYIVRDFNRDSFEARKKNMVDIAKRVGKGLHRDCYIEIVIDDSYYNMREQIIKHPHIIELAQQAMLDCDITPIMKPIRGGTDGAQLSFKGLPCPNIFTGGYNYHGKHEFITLEGMEKAVAVIMRISELTAKRAKES</sequence>
<comment type="function">
    <text evidence="1">Cleaves the N-terminal amino acid of tripeptides.</text>
</comment>
<comment type="catalytic activity">
    <reaction evidence="1">
        <text>Release of the N-terminal residue from a tripeptide.</text>
        <dbReference type="EC" id="3.4.11.4"/>
    </reaction>
</comment>
<comment type="cofactor">
    <cofactor evidence="1">
        <name>Zn(2+)</name>
        <dbReference type="ChEBI" id="CHEBI:29105"/>
    </cofactor>
    <text evidence="1">Binds 2 Zn(2+) ions per subunit.</text>
</comment>
<comment type="subcellular location">
    <subcellularLocation>
        <location evidence="1">Cytoplasm</location>
    </subcellularLocation>
</comment>
<comment type="similarity">
    <text evidence="1">Belongs to the peptidase M20B family.</text>
</comment>
<name>PEPT_YERPB</name>
<evidence type="ECO:0000255" key="1">
    <source>
        <dbReference type="HAMAP-Rule" id="MF_00550"/>
    </source>
</evidence>
<proteinExistence type="inferred from homology"/>